<dbReference type="EC" id="2.1.1.192" evidence="1"/>
<dbReference type="EMBL" id="CP000388">
    <property type="protein sequence ID" value="ABG41635.1"/>
    <property type="status" value="ALT_INIT"/>
    <property type="molecule type" value="Genomic_DNA"/>
</dbReference>
<dbReference type="RefSeq" id="WP_011575873.1">
    <property type="nucleotide sequence ID" value="NC_008228.1"/>
</dbReference>
<dbReference type="SMR" id="Q15R53"/>
<dbReference type="STRING" id="342610.Patl_3129"/>
<dbReference type="KEGG" id="pat:Patl_3129"/>
<dbReference type="eggNOG" id="COG0820">
    <property type="taxonomic scope" value="Bacteria"/>
</dbReference>
<dbReference type="HOGENOM" id="CLU_029101_0_0_6"/>
<dbReference type="OrthoDB" id="9793973at2"/>
<dbReference type="Proteomes" id="UP000001981">
    <property type="component" value="Chromosome"/>
</dbReference>
<dbReference type="GO" id="GO:0005737">
    <property type="term" value="C:cytoplasm"/>
    <property type="evidence" value="ECO:0007669"/>
    <property type="project" value="UniProtKB-SubCell"/>
</dbReference>
<dbReference type="GO" id="GO:0051539">
    <property type="term" value="F:4 iron, 4 sulfur cluster binding"/>
    <property type="evidence" value="ECO:0007669"/>
    <property type="project" value="UniProtKB-UniRule"/>
</dbReference>
<dbReference type="GO" id="GO:0046872">
    <property type="term" value="F:metal ion binding"/>
    <property type="evidence" value="ECO:0007669"/>
    <property type="project" value="UniProtKB-KW"/>
</dbReference>
<dbReference type="GO" id="GO:0070040">
    <property type="term" value="F:rRNA (adenine(2503)-C2-)-methyltransferase activity"/>
    <property type="evidence" value="ECO:0007669"/>
    <property type="project" value="UniProtKB-UniRule"/>
</dbReference>
<dbReference type="GO" id="GO:0019843">
    <property type="term" value="F:rRNA binding"/>
    <property type="evidence" value="ECO:0007669"/>
    <property type="project" value="UniProtKB-UniRule"/>
</dbReference>
<dbReference type="GO" id="GO:0002935">
    <property type="term" value="F:tRNA (adenine(37)-C2)-methyltransferase activity"/>
    <property type="evidence" value="ECO:0007669"/>
    <property type="project" value="UniProtKB-UniRule"/>
</dbReference>
<dbReference type="GO" id="GO:0000049">
    <property type="term" value="F:tRNA binding"/>
    <property type="evidence" value="ECO:0007669"/>
    <property type="project" value="UniProtKB-UniRule"/>
</dbReference>
<dbReference type="GO" id="GO:0070475">
    <property type="term" value="P:rRNA base methylation"/>
    <property type="evidence" value="ECO:0007669"/>
    <property type="project" value="UniProtKB-UniRule"/>
</dbReference>
<dbReference type="GO" id="GO:0030488">
    <property type="term" value="P:tRNA methylation"/>
    <property type="evidence" value="ECO:0007669"/>
    <property type="project" value="UniProtKB-UniRule"/>
</dbReference>
<dbReference type="CDD" id="cd01335">
    <property type="entry name" value="Radical_SAM"/>
    <property type="match status" value="1"/>
</dbReference>
<dbReference type="FunFam" id="1.10.150.530:FF:000003">
    <property type="entry name" value="Dual-specificity RNA methyltransferase RlmN"/>
    <property type="match status" value="1"/>
</dbReference>
<dbReference type="FunFam" id="3.20.20.70:FF:000008">
    <property type="entry name" value="Dual-specificity RNA methyltransferase RlmN"/>
    <property type="match status" value="1"/>
</dbReference>
<dbReference type="Gene3D" id="1.10.150.530">
    <property type="match status" value="1"/>
</dbReference>
<dbReference type="Gene3D" id="3.20.20.70">
    <property type="entry name" value="Aldolase class I"/>
    <property type="match status" value="1"/>
</dbReference>
<dbReference type="HAMAP" id="MF_01849">
    <property type="entry name" value="RNA_methyltr_RlmN"/>
    <property type="match status" value="1"/>
</dbReference>
<dbReference type="InterPro" id="IPR013785">
    <property type="entry name" value="Aldolase_TIM"/>
</dbReference>
<dbReference type="InterPro" id="IPR040072">
    <property type="entry name" value="Methyltransferase_A"/>
</dbReference>
<dbReference type="InterPro" id="IPR048641">
    <property type="entry name" value="RlmN_N"/>
</dbReference>
<dbReference type="InterPro" id="IPR027492">
    <property type="entry name" value="RNA_MTrfase_RlmN"/>
</dbReference>
<dbReference type="InterPro" id="IPR004383">
    <property type="entry name" value="rRNA_lsu_MTrfase_RlmN/Cfr"/>
</dbReference>
<dbReference type="InterPro" id="IPR007197">
    <property type="entry name" value="rSAM"/>
</dbReference>
<dbReference type="NCBIfam" id="NF008396">
    <property type="entry name" value="PRK11194.1"/>
    <property type="match status" value="1"/>
</dbReference>
<dbReference type="NCBIfam" id="TIGR00048">
    <property type="entry name" value="rRNA_mod_RlmN"/>
    <property type="match status" value="1"/>
</dbReference>
<dbReference type="PANTHER" id="PTHR30544">
    <property type="entry name" value="23S RRNA METHYLTRANSFERASE"/>
    <property type="match status" value="1"/>
</dbReference>
<dbReference type="PANTHER" id="PTHR30544:SF5">
    <property type="entry name" value="RADICAL SAM CORE DOMAIN-CONTAINING PROTEIN"/>
    <property type="match status" value="1"/>
</dbReference>
<dbReference type="Pfam" id="PF04055">
    <property type="entry name" value="Radical_SAM"/>
    <property type="match status" value="1"/>
</dbReference>
<dbReference type="Pfam" id="PF21016">
    <property type="entry name" value="RlmN_N"/>
    <property type="match status" value="1"/>
</dbReference>
<dbReference type="PIRSF" id="PIRSF006004">
    <property type="entry name" value="CHP00048"/>
    <property type="match status" value="1"/>
</dbReference>
<dbReference type="SFLD" id="SFLDF00275">
    <property type="entry name" value="adenosine_C2_methyltransferase"/>
    <property type="match status" value="1"/>
</dbReference>
<dbReference type="SFLD" id="SFLDS00029">
    <property type="entry name" value="Radical_SAM"/>
    <property type="match status" value="1"/>
</dbReference>
<dbReference type="SUPFAM" id="SSF102114">
    <property type="entry name" value="Radical SAM enzymes"/>
    <property type="match status" value="1"/>
</dbReference>
<dbReference type="PROSITE" id="PS51918">
    <property type="entry name" value="RADICAL_SAM"/>
    <property type="match status" value="1"/>
</dbReference>
<protein>
    <recommendedName>
        <fullName evidence="1">Dual-specificity RNA methyltransferase RlmN</fullName>
        <ecNumber evidence="1">2.1.1.192</ecNumber>
    </recommendedName>
    <alternativeName>
        <fullName evidence="1">23S rRNA (adenine(2503)-C(2))-methyltransferase</fullName>
    </alternativeName>
    <alternativeName>
        <fullName evidence="1">23S rRNA m2A2503 methyltransferase</fullName>
    </alternativeName>
    <alternativeName>
        <fullName evidence="1">Ribosomal RNA large subunit methyltransferase N</fullName>
    </alternativeName>
    <alternativeName>
        <fullName evidence="1">tRNA (adenine(37)-C(2))-methyltransferase</fullName>
    </alternativeName>
    <alternativeName>
        <fullName evidence="1">tRNA m2A37 methyltransferase</fullName>
    </alternativeName>
</protein>
<sequence length="376" mass="41546">MSAKPTKINLLNFNRAGLREYFSSIGEKPFRADQMMKWIYQAGVSDFDQMTNLNKALREKLKAQCEVKAPEIAYQQGASDGTIKFALRLEGGQEVETVWIPDEDRATLCVSSQVGCALECTFCSTAQQGFNRNLSVSEIIGQVWRVATTIGLSNDSAKRPITNVVMMGMGEPLLNLKNVVPAMDLMLDDLAFGLSKRRVTLSTSGVVPALDMLGDQIDVALAISLHAPDDKLRDEIVPINKKYPIQEFLAGVRRYLAKSNANQGKVTVEYVMLNGINDSTDQAHELAKVLADTPCKINLIPFNPYPGSPYSRSSNSRIDRFAKVLSSYGLMVVVRKTRGDDIDAACGQLVGDVVDRTKRMLKKQMKGDEISVKMEH</sequence>
<accession>Q15R53</accession>
<gene>
    <name evidence="1" type="primary">rlmN</name>
    <name type="ordered locus">Patl_3129</name>
</gene>
<name>RLMN_PSEA6</name>
<feature type="chain" id="PRO_0000350328" description="Dual-specificity RNA methyltransferase RlmN">
    <location>
        <begin position="1"/>
        <end position="376"/>
    </location>
</feature>
<feature type="domain" description="Radical SAM core" evidence="2">
    <location>
        <begin position="102"/>
        <end position="341"/>
    </location>
</feature>
<feature type="active site" description="Proton acceptor" evidence="1">
    <location>
        <position position="96"/>
    </location>
</feature>
<feature type="active site" description="S-methylcysteine intermediate" evidence="1">
    <location>
        <position position="346"/>
    </location>
</feature>
<feature type="binding site" evidence="1">
    <location>
        <position position="116"/>
    </location>
    <ligand>
        <name>[4Fe-4S] cluster</name>
        <dbReference type="ChEBI" id="CHEBI:49883"/>
        <note>4Fe-4S-S-AdoMet</note>
    </ligand>
</feature>
<feature type="binding site" evidence="1">
    <location>
        <position position="120"/>
    </location>
    <ligand>
        <name>[4Fe-4S] cluster</name>
        <dbReference type="ChEBI" id="CHEBI:49883"/>
        <note>4Fe-4S-S-AdoMet</note>
    </ligand>
</feature>
<feature type="binding site" evidence="1">
    <location>
        <position position="123"/>
    </location>
    <ligand>
        <name>[4Fe-4S] cluster</name>
        <dbReference type="ChEBI" id="CHEBI:49883"/>
        <note>4Fe-4S-S-AdoMet</note>
    </ligand>
</feature>
<feature type="binding site" evidence="1">
    <location>
        <begin position="170"/>
        <end position="171"/>
    </location>
    <ligand>
        <name>S-adenosyl-L-methionine</name>
        <dbReference type="ChEBI" id="CHEBI:59789"/>
    </ligand>
</feature>
<feature type="binding site" evidence="1">
    <location>
        <position position="202"/>
    </location>
    <ligand>
        <name>S-adenosyl-L-methionine</name>
        <dbReference type="ChEBI" id="CHEBI:59789"/>
    </ligand>
</feature>
<feature type="binding site" evidence="1">
    <location>
        <begin position="224"/>
        <end position="226"/>
    </location>
    <ligand>
        <name>S-adenosyl-L-methionine</name>
        <dbReference type="ChEBI" id="CHEBI:59789"/>
    </ligand>
</feature>
<feature type="binding site" evidence="1">
    <location>
        <position position="303"/>
    </location>
    <ligand>
        <name>S-adenosyl-L-methionine</name>
        <dbReference type="ChEBI" id="CHEBI:59789"/>
    </ligand>
</feature>
<feature type="disulfide bond" description="(transient)" evidence="1">
    <location>
        <begin position="109"/>
        <end position="346"/>
    </location>
</feature>
<evidence type="ECO:0000255" key="1">
    <source>
        <dbReference type="HAMAP-Rule" id="MF_01849"/>
    </source>
</evidence>
<evidence type="ECO:0000255" key="2">
    <source>
        <dbReference type="PROSITE-ProRule" id="PRU01266"/>
    </source>
</evidence>
<evidence type="ECO:0000305" key="3"/>
<organism>
    <name type="scientific">Pseudoalteromonas atlantica (strain T6c / ATCC BAA-1087)</name>
    <dbReference type="NCBI Taxonomy" id="3042615"/>
    <lineage>
        <taxon>Bacteria</taxon>
        <taxon>Pseudomonadati</taxon>
        <taxon>Pseudomonadota</taxon>
        <taxon>Gammaproteobacteria</taxon>
        <taxon>Alteromonadales</taxon>
        <taxon>Alteromonadaceae</taxon>
        <taxon>Paraglaciecola</taxon>
    </lineage>
</organism>
<reference key="1">
    <citation type="submission" date="2006-06" db="EMBL/GenBank/DDBJ databases">
        <title>Complete sequence of Pseudoalteromonas atlantica T6c.</title>
        <authorList>
            <consortium name="US DOE Joint Genome Institute"/>
            <person name="Copeland A."/>
            <person name="Lucas S."/>
            <person name="Lapidus A."/>
            <person name="Barry K."/>
            <person name="Detter J.C."/>
            <person name="Glavina del Rio T."/>
            <person name="Hammon N."/>
            <person name="Israni S."/>
            <person name="Dalin E."/>
            <person name="Tice H."/>
            <person name="Pitluck S."/>
            <person name="Saunders E."/>
            <person name="Brettin T."/>
            <person name="Bruce D."/>
            <person name="Han C."/>
            <person name="Tapia R."/>
            <person name="Gilna P."/>
            <person name="Schmutz J."/>
            <person name="Larimer F."/>
            <person name="Land M."/>
            <person name="Hauser L."/>
            <person name="Kyrpides N."/>
            <person name="Kim E."/>
            <person name="Karls A.C."/>
            <person name="Bartlett D."/>
            <person name="Higgins B.P."/>
            <person name="Richardson P."/>
        </authorList>
    </citation>
    <scope>NUCLEOTIDE SEQUENCE [LARGE SCALE GENOMIC DNA]</scope>
    <source>
        <strain>T6c / ATCC BAA-1087</strain>
    </source>
</reference>
<keyword id="KW-0004">4Fe-4S</keyword>
<keyword id="KW-0963">Cytoplasm</keyword>
<keyword id="KW-1015">Disulfide bond</keyword>
<keyword id="KW-0408">Iron</keyword>
<keyword id="KW-0411">Iron-sulfur</keyword>
<keyword id="KW-0479">Metal-binding</keyword>
<keyword id="KW-0489">Methyltransferase</keyword>
<keyword id="KW-0698">rRNA processing</keyword>
<keyword id="KW-0949">S-adenosyl-L-methionine</keyword>
<keyword id="KW-0808">Transferase</keyword>
<keyword id="KW-0819">tRNA processing</keyword>
<proteinExistence type="inferred from homology"/>
<comment type="function">
    <text evidence="1">Specifically methylates position 2 of adenine 2503 in 23S rRNA and position 2 of adenine 37 in tRNAs. m2A2503 modification seems to play a crucial role in the proofreading step occurring at the peptidyl transferase center and thus would serve to optimize ribosomal fidelity.</text>
</comment>
<comment type="catalytic activity">
    <reaction evidence="1">
        <text>adenosine(2503) in 23S rRNA + 2 reduced [2Fe-2S]-[ferredoxin] + 2 S-adenosyl-L-methionine = 2-methyladenosine(2503) in 23S rRNA + 5'-deoxyadenosine + L-methionine + 2 oxidized [2Fe-2S]-[ferredoxin] + S-adenosyl-L-homocysteine</text>
        <dbReference type="Rhea" id="RHEA:42916"/>
        <dbReference type="Rhea" id="RHEA-COMP:10000"/>
        <dbReference type="Rhea" id="RHEA-COMP:10001"/>
        <dbReference type="Rhea" id="RHEA-COMP:10152"/>
        <dbReference type="Rhea" id="RHEA-COMP:10282"/>
        <dbReference type="ChEBI" id="CHEBI:17319"/>
        <dbReference type="ChEBI" id="CHEBI:33737"/>
        <dbReference type="ChEBI" id="CHEBI:33738"/>
        <dbReference type="ChEBI" id="CHEBI:57844"/>
        <dbReference type="ChEBI" id="CHEBI:57856"/>
        <dbReference type="ChEBI" id="CHEBI:59789"/>
        <dbReference type="ChEBI" id="CHEBI:74411"/>
        <dbReference type="ChEBI" id="CHEBI:74497"/>
        <dbReference type="EC" id="2.1.1.192"/>
    </reaction>
</comment>
<comment type="catalytic activity">
    <reaction evidence="1">
        <text>adenosine(37) in tRNA + 2 reduced [2Fe-2S]-[ferredoxin] + 2 S-adenosyl-L-methionine = 2-methyladenosine(37) in tRNA + 5'-deoxyadenosine + L-methionine + 2 oxidized [2Fe-2S]-[ferredoxin] + S-adenosyl-L-homocysteine</text>
        <dbReference type="Rhea" id="RHEA:43332"/>
        <dbReference type="Rhea" id="RHEA-COMP:10000"/>
        <dbReference type="Rhea" id="RHEA-COMP:10001"/>
        <dbReference type="Rhea" id="RHEA-COMP:10162"/>
        <dbReference type="Rhea" id="RHEA-COMP:10485"/>
        <dbReference type="ChEBI" id="CHEBI:17319"/>
        <dbReference type="ChEBI" id="CHEBI:33737"/>
        <dbReference type="ChEBI" id="CHEBI:33738"/>
        <dbReference type="ChEBI" id="CHEBI:57844"/>
        <dbReference type="ChEBI" id="CHEBI:57856"/>
        <dbReference type="ChEBI" id="CHEBI:59789"/>
        <dbReference type="ChEBI" id="CHEBI:74411"/>
        <dbReference type="ChEBI" id="CHEBI:74497"/>
        <dbReference type="EC" id="2.1.1.192"/>
    </reaction>
</comment>
<comment type="cofactor">
    <cofactor evidence="1">
        <name>[4Fe-4S] cluster</name>
        <dbReference type="ChEBI" id="CHEBI:49883"/>
    </cofactor>
    <text evidence="1">Binds 1 [4Fe-4S] cluster. The cluster is coordinated with 3 cysteines and an exchangeable S-adenosyl-L-methionine.</text>
</comment>
<comment type="subcellular location">
    <subcellularLocation>
        <location evidence="1">Cytoplasm</location>
    </subcellularLocation>
</comment>
<comment type="miscellaneous">
    <text evidence="1">Reaction proceeds by a ping-pong mechanism involving intermediate methylation of a conserved cysteine residue.</text>
</comment>
<comment type="similarity">
    <text evidence="1">Belongs to the radical SAM superfamily. RlmN family.</text>
</comment>
<comment type="sequence caution" evidence="3">
    <conflict type="erroneous initiation">
        <sequence resource="EMBL-CDS" id="ABG41635"/>
    </conflict>
</comment>